<name>ALR_STRZT</name>
<feature type="chain" id="PRO_1000164633" description="Alanine racemase">
    <location>
        <begin position="1"/>
        <end position="367"/>
    </location>
</feature>
<feature type="active site" description="Proton acceptor; specific for D-alanine" evidence="1">
    <location>
        <position position="40"/>
    </location>
</feature>
<feature type="active site" description="Proton acceptor; specific for L-alanine" evidence="1">
    <location>
        <position position="263"/>
    </location>
</feature>
<feature type="binding site" evidence="1">
    <location>
        <position position="136"/>
    </location>
    <ligand>
        <name>substrate</name>
    </ligand>
</feature>
<feature type="binding site" evidence="1">
    <location>
        <position position="310"/>
    </location>
    <ligand>
        <name>substrate</name>
    </ligand>
</feature>
<feature type="modified residue" description="N6-(pyridoxal phosphate)lysine" evidence="1">
    <location>
        <position position="40"/>
    </location>
</feature>
<accession>C1CSV9</accession>
<sequence>MKASPHRPTKVLIHLGAIRQNIQQMGAHIPQGTLKWAVVKANAYGHGAVAVAKAIQDDVDGFCVSNIDEAIELRQAGLSKPILILGVSEIEAVALAKEYDFTLTVAGLEWIQALLDKEVDLTGLTVHLKIDSGMGRIGFREASEVEQAQDLLQQHGVRVEGIFTHFATADEESDDYFNAQLERFKTILASMKEVPELVHASNSATTLWHVETIFNAVRMGDAMYGLNPSGAVLDLPYDLIPALTLESALVHVKTVPAGACMGYGATYQADSEQVIATVPIGYADGWTRDMQNFSVLVDGQACPIVGRVSMDQITIRLPKLYPLGTKVTLIGSNGDKEITATQVATYRVTINYEVVCLLSDRIPREYY</sequence>
<evidence type="ECO:0000255" key="1">
    <source>
        <dbReference type="HAMAP-Rule" id="MF_01201"/>
    </source>
</evidence>
<keyword id="KW-0413">Isomerase</keyword>
<keyword id="KW-0663">Pyridoxal phosphate</keyword>
<proteinExistence type="inferred from homology"/>
<organism>
    <name type="scientific">Streptococcus pneumoniae (strain Taiwan19F-14)</name>
    <dbReference type="NCBI Taxonomy" id="487213"/>
    <lineage>
        <taxon>Bacteria</taxon>
        <taxon>Bacillati</taxon>
        <taxon>Bacillota</taxon>
        <taxon>Bacilli</taxon>
        <taxon>Lactobacillales</taxon>
        <taxon>Streptococcaceae</taxon>
        <taxon>Streptococcus</taxon>
    </lineage>
</organism>
<reference key="1">
    <citation type="journal article" date="2010" name="Genome Biol.">
        <title>Structure and dynamics of the pan-genome of Streptococcus pneumoniae and closely related species.</title>
        <authorList>
            <person name="Donati C."/>
            <person name="Hiller N.L."/>
            <person name="Tettelin H."/>
            <person name="Muzzi A."/>
            <person name="Croucher N.J."/>
            <person name="Angiuoli S.V."/>
            <person name="Oggioni M."/>
            <person name="Dunning Hotopp J.C."/>
            <person name="Hu F.Z."/>
            <person name="Riley D.R."/>
            <person name="Covacci A."/>
            <person name="Mitchell T.J."/>
            <person name="Bentley S.D."/>
            <person name="Kilian M."/>
            <person name="Ehrlich G.D."/>
            <person name="Rappuoli R."/>
            <person name="Moxon E.R."/>
            <person name="Masignani V."/>
        </authorList>
    </citation>
    <scope>NUCLEOTIDE SEQUENCE [LARGE SCALE GENOMIC DNA]</scope>
    <source>
        <strain>Taiwan19F-14</strain>
    </source>
</reference>
<dbReference type="EC" id="5.1.1.1" evidence="1"/>
<dbReference type="EMBL" id="CP000921">
    <property type="protein sequence ID" value="ACO22643.1"/>
    <property type="molecule type" value="Genomic_DNA"/>
</dbReference>
<dbReference type="RefSeq" id="WP_000648103.1">
    <property type="nucleotide sequence ID" value="NC_012469.1"/>
</dbReference>
<dbReference type="SMR" id="C1CSV9"/>
<dbReference type="KEGG" id="snt:SPT_1636"/>
<dbReference type="HOGENOM" id="CLU_028393_2_1_9"/>
<dbReference type="UniPathway" id="UPA00042">
    <property type="reaction ID" value="UER00497"/>
</dbReference>
<dbReference type="GO" id="GO:0005829">
    <property type="term" value="C:cytosol"/>
    <property type="evidence" value="ECO:0007669"/>
    <property type="project" value="TreeGrafter"/>
</dbReference>
<dbReference type="GO" id="GO:0008784">
    <property type="term" value="F:alanine racemase activity"/>
    <property type="evidence" value="ECO:0007669"/>
    <property type="project" value="UniProtKB-UniRule"/>
</dbReference>
<dbReference type="GO" id="GO:0030170">
    <property type="term" value="F:pyridoxal phosphate binding"/>
    <property type="evidence" value="ECO:0007669"/>
    <property type="project" value="UniProtKB-UniRule"/>
</dbReference>
<dbReference type="GO" id="GO:0030632">
    <property type="term" value="P:D-alanine biosynthetic process"/>
    <property type="evidence" value="ECO:0007669"/>
    <property type="project" value="UniProtKB-UniRule"/>
</dbReference>
<dbReference type="GO" id="GO:0009252">
    <property type="term" value="P:peptidoglycan biosynthetic process"/>
    <property type="evidence" value="ECO:0007669"/>
    <property type="project" value="TreeGrafter"/>
</dbReference>
<dbReference type="CDD" id="cd00430">
    <property type="entry name" value="PLPDE_III_AR"/>
    <property type="match status" value="1"/>
</dbReference>
<dbReference type="FunFam" id="2.40.37.10:FF:000006">
    <property type="entry name" value="Alanine racemase"/>
    <property type="match status" value="1"/>
</dbReference>
<dbReference type="FunFam" id="3.20.20.10:FF:000002">
    <property type="entry name" value="Alanine racemase"/>
    <property type="match status" value="1"/>
</dbReference>
<dbReference type="Gene3D" id="3.20.20.10">
    <property type="entry name" value="Alanine racemase"/>
    <property type="match status" value="1"/>
</dbReference>
<dbReference type="Gene3D" id="2.40.37.10">
    <property type="entry name" value="Lyase, Ornithine Decarboxylase, Chain A, domain 1"/>
    <property type="match status" value="1"/>
</dbReference>
<dbReference type="HAMAP" id="MF_01201">
    <property type="entry name" value="Ala_racemase"/>
    <property type="match status" value="1"/>
</dbReference>
<dbReference type="InterPro" id="IPR000821">
    <property type="entry name" value="Ala_racemase"/>
</dbReference>
<dbReference type="InterPro" id="IPR009006">
    <property type="entry name" value="Ala_racemase/Decarboxylase_C"/>
</dbReference>
<dbReference type="InterPro" id="IPR011079">
    <property type="entry name" value="Ala_racemase_C"/>
</dbReference>
<dbReference type="InterPro" id="IPR001608">
    <property type="entry name" value="Ala_racemase_N"/>
</dbReference>
<dbReference type="InterPro" id="IPR020622">
    <property type="entry name" value="Ala_racemase_pyridoxalP-BS"/>
</dbReference>
<dbReference type="InterPro" id="IPR029066">
    <property type="entry name" value="PLP-binding_barrel"/>
</dbReference>
<dbReference type="NCBIfam" id="TIGR00492">
    <property type="entry name" value="alr"/>
    <property type="match status" value="1"/>
</dbReference>
<dbReference type="PANTHER" id="PTHR30511">
    <property type="entry name" value="ALANINE RACEMASE"/>
    <property type="match status" value="1"/>
</dbReference>
<dbReference type="PANTHER" id="PTHR30511:SF0">
    <property type="entry name" value="ALANINE RACEMASE, CATABOLIC-RELATED"/>
    <property type="match status" value="1"/>
</dbReference>
<dbReference type="Pfam" id="PF00842">
    <property type="entry name" value="Ala_racemase_C"/>
    <property type="match status" value="1"/>
</dbReference>
<dbReference type="Pfam" id="PF01168">
    <property type="entry name" value="Ala_racemase_N"/>
    <property type="match status" value="1"/>
</dbReference>
<dbReference type="PRINTS" id="PR00992">
    <property type="entry name" value="ALARACEMASE"/>
</dbReference>
<dbReference type="SMART" id="SM01005">
    <property type="entry name" value="Ala_racemase_C"/>
    <property type="match status" value="1"/>
</dbReference>
<dbReference type="SUPFAM" id="SSF50621">
    <property type="entry name" value="Alanine racemase C-terminal domain-like"/>
    <property type="match status" value="1"/>
</dbReference>
<dbReference type="SUPFAM" id="SSF51419">
    <property type="entry name" value="PLP-binding barrel"/>
    <property type="match status" value="1"/>
</dbReference>
<dbReference type="PROSITE" id="PS00395">
    <property type="entry name" value="ALANINE_RACEMASE"/>
    <property type="match status" value="1"/>
</dbReference>
<comment type="function">
    <text evidence="1">Catalyzes the interconversion of L-alanine and D-alanine. May also act on other amino acids.</text>
</comment>
<comment type="catalytic activity">
    <reaction evidence="1">
        <text>L-alanine = D-alanine</text>
        <dbReference type="Rhea" id="RHEA:20249"/>
        <dbReference type="ChEBI" id="CHEBI:57416"/>
        <dbReference type="ChEBI" id="CHEBI:57972"/>
        <dbReference type="EC" id="5.1.1.1"/>
    </reaction>
</comment>
<comment type="cofactor">
    <cofactor evidence="1">
        <name>pyridoxal 5'-phosphate</name>
        <dbReference type="ChEBI" id="CHEBI:597326"/>
    </cofactor>
</comment>
<comment type="pathway">
    <text evidence="1">Amino-acid biosynthesis; D-alanine biosynthesis; D-alanine from L-alanine: step 1/1.</text>
</comment>
<comment type="similarity">
    <text evidence="1">Belongs to the alanine racemase family.</text>
</comment>
<protein>
    <recommendedName>
        <fullName evidence="1">Alanine racemase</fullName>
        <ecNumber evidence="1">5.1.1.1</ecNumber>
    </recommendedName>
</protein>
<gene>
    <name type="primary">alr</name>
    <name type="ordered locus">SPT_1636</name>
</gene>